<proteinExistence type="evidence at protein level"/>
<sequence length="267" mass="29625">MSQHNILEALNVRVVGTGDRILFLAHGFGTDQSAWHLILPYFTQNYRVVLYDLVCAGSVNPDYFDFNRYTTLDPYVDDLLNIVDSLGIQNCAYVGHSVSAMIGIIASIRRPELFSKLILIGFSPRFLNDEDYHGGFEEGEIEKVFSAMEANYEAWVHGFAPLAVGADVPAAVREFSRTLFNMRPDISLFVSRTVFNSDLRGVLGLVRVPTCVIQTAKDVSVPASVAEYLRSHLGGDTTVETLKTEGHLPQLSAPAQLAQFLRRALPR</sequence>
<organism>
    <name type="scientific">Arabidopsis thaliana</name>
    <name type="common">Mouse-ear cress</name>
    <dbReference type="NCBI Taxonomy" id="3702"/>
    <lineage>
        <taxon>Eukaryota</taxon>
        <taxon>Viridiplantae</taxon>
        <taxon>Streptophyta</taxon>
        <taxon>Embryophyta</taxon>
        <taxon>Tracheophyta</taxon>
        <taxon>Spermatophyta</taxon>
        <taxon>Magnoliopsida</taxon>
        <taxon>eudicotyledons</taxon>
        <taxon>Gunneridae</taxon>
        <taxon>Pentapetalae</taxon>
        <taxon>rosids</taxon>
        <taxon>malvids</taxon>
        <taxon>Brassicales</taxon>
        <taxon>Brassicaceae</taxon>
        <taxon>Camelineae</taxon>
        <taxon>Arabidopsis</taxon>
    </lineage>
</organism>
<protein>
    <recommendedName>
        <fullName evidence="10">Strigolactone esterase D14</fullName>
        <ecNumber evidence="4">3.1.-.-</ecNumber>
    </recommendedName>
    <alternativeName>
        <fullName evidence="9">Protein DWARF 14</fullName>
        <shortName evidence="9">AtD14</shortName>
    </alternativeName>
</protein>
<gene>
    <name evidence="9" type="primary">D14</name>
    <name evidence="13" type="ordered locus">At3g03990</name>
    <name evidence="14" type="ORF">T11I18.10</name>
</gene>
<accession>Q9SQR3</accession>
<accession>Q8L9M4</accession>
<dbReference type="EC" id="3.1.-.-" evidence="4"/>
<dbReference type="EMBL" id="AC011698">
    <property type="protein sequence ID" value="AAF05858.1"/>
    <property type="molecule type" value="Genomic_DNA"/>
</dbReference>
<dbReference type="EMBL" id="CP002686">
    <property type="protein sequence ID" value="AEE74023.1"/>
    <property type="molecule type" value="Genomic_DNA"/>
</dbReference>
<dbReference type="EMBL" id="AY064145">
    <property type="protein sequence ID" value="AAL36052.1"/>
    <property type="molecule type" value="mRNA"/>
</dbReference>
<dbReference type="EMBL" id="AY097402">
    <property type="protein sequence ID" value="AAM19918.1"/>
    <property type="molecule type" value="mRNA"/>
</dbReference>
<dbReference type="EMBL" id="AY088353">
    <property type="protein sequence ID" value="AAM65892.1"/>
    <property type="molecule type" value="mRNA"/>
</dbReference>
<dbReference type="RefSeq" id="NP_566220.1">
    <property type="nucleotide sequence ID" value="NM_111270.3"/>
</dbReference>
<dbReference type="PDB" id="4IH4">
    <property type="method" value="X-ray"/>
    <property type="resolution" value="3.50 A"/>
    <property type="chains" value="A/B/C/D=1-267"/>
</dbReference>
<dbReference type="PDB" id="5HZG">
    <property type="method" value="X-ray"/>
    <property type="resolution" value="3.30 A"/>
    <property type="chains" value="A/E=1-267"/>
</dbReference>
<dbReference type="PDB" id="8VD3">
    <property type="method" value="X-ray"/>
    <property type="resolution" value="2.00 A"/>
    <property type="chains" value="A/B=1-267"/>
</dbReference>
<dbReference type="PDBsum" id="4IH4"/>
<dbReference type="PDBsum" id="5HZG"/>
<dbReference type="PDBsum" id="8VD3"/>
<dbReference type="SMR" id="Q9SQR3"/>
<dbReference type="BioGRID" id="4889">
    <property type="interactions" value="2"/>
</dbReference>
<dbReference type="FunCoup" id="Q9SQR3">
    <property type="interactions" value="17"/>
</dbReference>
<dbReference type="IntAct" id="Q9SQR3">
    <property type="interactions" value="1"/>
</dbReference>
<dbReference type="STRING" id="3702.Q9SQR3"/>
<dbReference type="ESTHER" id="arath-AtD14">
    <property type="family name" value="RsbQ-like"/>
</dbReference>
<dbReference type="MEROPS" id="S33.A18"/>
<dbReference type="PaxDb" id="3702-AT3G03990.1"/>
<dbReference type="ProteomicsDB" id="222743"/>
<dbReference type="EnsemblPlants" id="AT3G03990.1">
    <property type="protein sequence ID" value="AT3G03990.1"/>
    <property type="gene ID" value="AT3G03990"/>
</dbReference>
<dbReference type="GeneID" id="819554"/>
<dbReference type="Gramene" id="AT3G03990.1">
    <property type="protein sequence ID" value="AT3G03990.1"/>
    <property type="gene ID" value="AT3G03990"/>
</dbReference>
<dbReference type="KEGG" id="ath:AT3G03990"/>
<dbReference type="Araport" id="AT3G03990"/>
<dbReference type="TAIR" id="AT3G03990">
    <property type="gene designation" value="D14"/>
</dbReference>
<dbReference type="eggNOG" id="ENOG502QVRR">
    <property type="taxonomic scope" value="Eukaryota"/>
</dbReference>
<dbReference type="HOGENOM" id="CLU_020336_30_0_1"/>
<dbReference type="InParanoid" id="Q9SQR3"/>
<dbReference type="OMA" id="PSCVIQT"/>
<dbReference type="PhylomeDB" id="Q9SQR3"/>
<dbReference type="EvolutionaryTrace" id="Q9SQR3"/>
<dbReference type="PRO" id="PR:Q9SQR3"/>
<dbReference type="Proteomes" id="UP000006548">
    <property type="component" value="Chromosome 3"/>
</dbReference>
<dbReference type="ExpressionAtlas" id="Q9SQR3">
    <property type="expression patterns" value="baseline and differential"/>
</dbReference>
<dbReference type="GO" id="GO:0005737">
    <property type="term" value="C:cytoplasm"/>
    <property type="evidence" value="ECO:0007669"/>
    <property type="project" value="UniProtKB-SubCell"/>
</dbReference>
<dbReference type="GO" id="GO:0005634">
    <property type="term" value="C:nucleus"/>
    <property type="evidence" value="ECO:0007669"/>
    <property type="project" value="UniProtKB-SubCell"/>
</dbReference>
<dbReference type="GO" id="GO:0016787">
    <property type="term" value="F:hydrolase activity"/>
    <property type="evidence" value="ECO:0007669"/>
    <property type="project" value="UniProtKB-KW"/>
</dbReference>
<dbReference type="GO" id="GO:1902348">
    <property type="term" value="P:cellular response to strigolactone"/>
    <property type="evidence" value="ECO:0000270"/>
    <property type="project" value="TAIR"/>
</dbReference>
<dbReference type="GO" id="GO:0010223">
    <property type="term" value="P:secondary shoot formation"/>
    <property type="evidence" value="ECO:0000315"/>
    <property type="project" value="UniProtKB"/>
</dbReference>
<dbReference type="GO" id="GO:1901601">
    <property type="term" value="P:strigolactone biosynthetic process"/>
    <property type="evidence" value="ECO:0000315"/>
    <property type="project" value="UniProtKB"/>
</dbReference>
<dbReference type="FunFam" id="3.40.50.1820:FF:000042">
    <property type="entry name" value="probable strigolactone esterase DAD2"/>
    <property type="match status" value="1"/>
</dbReference>
<dbReference type="Gene3D" id="3.40.50.1820">
    <property type="entry name" value="alpha/beta hydrolase"/>
    <property type="match status" value="1"/>
</dbReference>
<dbReference type="InterPro" id="IPR000073">
    <property type="entry name" value="AB_hydrolase_1"/>
</dbReference>
<dbReference type="InterPro" id="IPR029058">
    <property type="entry name" value="AB_hydrolase_fold"/>
</dbReference>
<dbReference type="PANTHER" id="PTHR43039">
    <property type="entry name" value="ESTERASE-RELATED"/>
    <property type="match status" value="1"/>
</dbReference>
<dbReference type="Pfam" id="PF12697">
    <property type="entry name" value="Abhydrolase_6"/>
    <property type="match status" value="1"/>
</dbReference>
<dbReference type="SUPFAM" id="SSF53474">
    <property type="entry name" value="alpha/beta-Hydrolases"/>
    <property type="match status" value="1"/>
</dbReference>
<keyword id="KW-0002">3D-structure</keyword>
<keyword id="KW-0963">Cytoplasm</keyword>
<keyword id="KW-0378">Hydrolase</keyword>
<keyword id="KW-0539">Nucleus</keyword>
<keyword id="KW-1185">Reference proteome</keyword>
<feature type="chain" id="PRO_0000422053" description="Strigolactone esterase D14">
    <location>
        <begin position="1"/>
        <end position="267"/>
    </location>
</feature>
<feature type="active site" description="Nucleophile" evidence="2 4">
    <location>
        <position position="97"/>
    </location>
</feature>
<feature type="active site" evidence="12">
    <location>
        <position position="218"/>
    </location>
</feature>
<feature type="active site" evidence="12">
    <location>
        <position position="247"/>
    </location>
</feature>
<feature type="mutagenesis site" description="Loss of activity." evidence="4">
    <original>S</original>
    <variation>A</variation>
    <location>
        <position position="97"/>
    </location>
</feature>
<feature type="mutagenesis site" description="Loss of interaction with MAX2." evidence="7">
    <original>G</original>
    <variation>E</variation>
    <location>
        <position position="158"/>
    </location>
</feature>
<feature type="mutagenesis site" description="In d14-seto; loss of activity." evidence="3">
    <original>P</original>
    <variation>L</variation>
    <location>
        <position position="169"/>
    </location>
</feature>
<feature type="sequence conflict" description="In Ref. 4; AAM65892." evidence="11" ref="4">
    <original>D</original>
    <variation>E</variation>
    <location>
        <position position="236"/>
    </location>
</feature>
<feature type="helix" evidence="17">
    <location>
        <begin position="6"/>
        <end position="9"/>
    </location>
</feature>
<feature type="strand" evidence="17">
    <location>
        <begin position="13"/>
        <end position="16"/>
    </location>
</feature>
<feature type="strand" evidence="17">
    <location>
        <begin position="18"/>
        <end position="25"/>
    </location>
</feature>
<feature type="strand" evidence="16">
    <location>
        <begin position="28"/>
        <end position="30"/>
    </location>
</feature>
<feature type="helix" evidence="17">
    <location>
        <begin position="32"/>
        <end position="35"/>
    </location>
</feature>
<feature type="turn" evidence="17">
    <location>
        <begin position="36"/>
        <end position="38"/>
    </location>
</feature>
<feature type="helix" evidence="17">
    <location>
        <begin position="39"/>
        <end position="41"/>
    </location>
</feature>
<feature type="turn" evidence="17">
    <location>
        <begin position="42"/>
        <end position="45"/>
    </location>
</feature>
<feature type="strand" evidence="17">
    <location>
        <begin position="46"/>
        <end position="50"/>
    </location>
</feature>
<feature type="strand" evidence="15">
    <location>
        <begin position="54"/>
        <end position="56"/>
    </location>
</feature>
<feature type="helix" evidence="17">
    <location>
        <begin position="61"/>
        <end position="63"/>
    </location>
</feature>
<feature type="turn" evidence="17">
    <location>
        <begin position="66"/>
        <end position="68"/>
    </location>
</feature>
<feature type="strand" evidence="17">
    <location>
        <begin position="70"/>
        <end position="72"/>
    </location>
</feature>
<feature type="helix" evidence="17">
    <location>
        <begin position="73"/>
        <end position="86"/>
    </location>
</feature>
<feature type="strand" evidence="17">
    <location>
        <begin position="90"/>
        <end position="96"/>
    </location>
</feature>
<feature type="helix" evidence="17">
    <location>
        <begin position="98"/>
        <end position="109"/>
    </location>
</feature>
<feature type="helix" evidence="17">
    <location>
        <begin position="111"/>
        <end position="113"/>
    </location>
</feature>
<feature type="strand" evidence="17">
    <location>
        <begin position="114"/>
        <end position="121"/>
    </location>
</feature>
<feature type="strand" evidence="16">
    <location>
        <begin position="134"/>
        <end position="136"/>
    </location>
</feature>
<feature type="helix" evidence="17">
    <location>
        <begin position="138"/>
        <end position="150"/>
    </location>
</feature>
<feature type="helix" evidence="17">
    <location>
        <begin position="152"/>
        <end position="164"/>
    </location>
</feature>
<feature type="helix" evidence="17">
    <location>
        <begin position="169"/>
        <end position="181"/>
    </location>
</feature>
<feature type="helix" evidence="17">
    <location>
        <begin position="184"/>
        <end position="195"/>
    </location>
</feature>
<feature type="turn" evidence="17">
    <location>
        <begin position="200"/>
        <end position="202"/>
    </location>
</feature>
<feature type="helix" evidence="17">
    <location>
        <begin position="203"/>
        <end position="205"/>
    </location>
</feature>
<feature type="strand" evidence="17">
    <location>
        <begin position="210"/>
        <end position="214"/>
    </location>
</feature>
<feature type="strand" evidence="15">
    <location>
        <begin position="219"/>
        <end position="221"/>
    </location>
</feature>
<feature type="helix" evidence="17">
    <location>
        <begin position="224"/>
        <end position="232"/>
    </location>
</feature>
<feature type="strand" evidence="17">
    <location>
        <begin position="237"/>
        <end position="241"/>
    </location>
</feature>
<feature type="helix" evidence="17">
    <location>
        <begin position="249"/>
        <end position="252"/>
    </location>
</feature>
<feature type="helix" evidence="17">
    <location>
        <begin position="254"/>
        <end position="264"/>
    </location>
</feature>
<comment type="function">
    <text evidence="1 2 3 4 7">Involved in strigolactone signaling pathway (PubMed:22357928). Does not move long distances acropetally in the plant to regulate shoot branching and is rapidly degraded in the presence of strigolactones (PubMed:24610723). Functions downstream of strigolactone synthesis, as a component of hormone signaling and as an enzyme that participates in the conversion of strigolactones to the bioactive form (PubMed:22357928). Acts probably as a strigolactone receptor (PubMed:24610723). Strigolactones are hormones that inhibit tillering and shoot branching through the MAX-dependent pathway, contribute to the regulation of shoot architectural response to phosphate-limiting conditions and function as rhizosphere signal that stimulates hyphal branching of arbuscular mycorrhizal fungi and trigger seed germination of root parasitic weeds (PubMed:22357928). Hydrolyzes methyl carlactonoate (MeCLA), but not carlactone (CL) or carlactonoic acid (CLA) (PubMed:25425668). Hydrolyzes the butenolide ring of strigolactones (PubMed:23381136). The initial nucleophilic attack causes an electron shift, followed by the addition of a water molecule, to lead to the release of the ABC ring product and the formation of a 'Ser-97'-stabilized open lactone intermediate (PubMed:23381136). Has no esterase activity for 4-nitrophenyl butyrate (PubMed:23381136). Binds and hydrolyzes the synthetic strigolactone analog GR24 in vitro. Forms a stable covalent complex with the D-ring of strigolactone, which is essential for hormone bioactivity. The D-ring is attached to His-247 of the catalytic triad. The hydrolysis of strigolactone into a covalently linked intermediate molecule initiates a conformational change of D14 to facilitate interaction with MAX2 and formation of the D14-MAX2-SKP1/ASK1 complex to trigger strigolactone signaling. This mechanism defines D14 as a non-canonical hormone receptor with dual functions to generate and sense the active form of strigolactone (PubMed:27479325).</text>
</comment>
<comment type="subunit">
    <text evidence="5 6 7">Interacts with SMXL6, SMXL7 and SMXL8 (PubMed:25713176, PubMed:26546446). The interaction with SMXLs occurs in the presence of (2'R) stereoisomers of strigolactones, but not (2'S) stereoisomers (PubMed:25713176). Interacts with MAX2. Forms a complex with MAX2 and SKP1A/ASK1 in presence of strigolactone (PubMed:27479325).</text>
</comment>
<comment type="interaction">
    <interactant intactId="EBI-25530219">
        <id>Q9SQR3</id>
    </interactant>
    <interactant intactId="EBI-2008207">
        <id>Q9SZN7</id>
        <label>HIPP26</label>
    </interactant>
    <organismsDiffer>false</organismsDiffer>
    <experiments>3</experiments>
</comment>
<comment type="subcellular location">
    <subcellularLocation>
        <location evidence="3">Cytoplasm</location>
    </subcellularLocation>
    <subcellularLocation>
        <location evidence="3">Nucleus</location>
    </subcellularLocation>
</comment>
<comment type="tissue specificity">
    <text evidence="3">Expressed at high levels in rosette and cauline leaves and at lower levels in axillary buds, inflorescences, stems, roots and developing vascular tissue of cotyledons.</text>
</comment>
<comment type="induction">
    <text evidence="3">Not regulated by strigolactone, auxin signaling or bud growth status.</text>
</comment>
<comment type="disruption phenotype">
    <text evidence="1 8">Increased shoot branching (PubMed:22357928, PubMed:32399509). Accumulation of carlactone (CL), carlactonoate (CLA), methyl carlactonoate (MeCLA) and of their derivatives, including 3-hydroxycarlactone (3-HO-CL), 4-hydroxycarlactone (4-HO-CL) and 16-hydroxycarlactone (16-HO-CL) (PubMed:32399509). Corresponding hydroxycarlactonoates are also observed, such as 3-hydroxycarlactonoate (3-HO-CLA), 4-hydroxycarlactonoate (4-HO-CLA) and 16-hydroxycarlactonoate (16-HO-CLA), as well as methylated derivatives (11R)-hydroxymethyl carlactonoate (1'-HO-MeCLA), 4-hydroxymethyl carlactonoate (4-HO-MeCLA) and 16-hydroxymethyl carlactonoate (16-HO-MeCLA) (PubMed:32399509).</text>
</comment>
<comment type="miscellaneous">
    <text>The initial nucleophilic attack of strigolactones by D14 causes an electron shift, followed by the addition of a water molecule, to lead to the release of the ABC ring product and the formation of a S97-stabilized open lactone intermediate.</text>
</comment>
<comment type="similarity">
    <text evidence="11">Belongs to the AB hydrolase superfamily.</text>
</comment>
<reference key="1">
    <citation type="journal article" date="2000" name="Nature">
        <title>Sequence and analysis of chromosome 3 of the plant Arabidopsis thaliana.</title>
        <authorList>
            <person name="Salanoubat M."/>
            <person name="Lemcke K."/>
            <person name="Rieger M."/>
            <person name="Ansorge W."/>
            <person name="Unseld M."/>
            <person name="Fartmann B."/>
            <person name="Valle G."/>
            <person name="Bloecker H."/>
            <person name="Perez-Alonso M."/>
            <person name="Obermaier B."/>
            <person name="Delseny M."/>
            <person name="Boutry M."/>
            <person name="Grivell L.A."/>
            <person name="Mache R."/>
            <person name="Puigdomenech P."/>
            <person name="De Simone V."/>
            <person name="Choisne N."/>
            <person name="Artiguenave F."/>
            <person name="Robert C."/>
            <person name="Brottier P."/>
            <person name="Wincker P."/>
            <person name="Cattolico L."/>
            <person name="Weissenbach J."/>
            <person name="Saurin W."/>
            <person name="Quetier F."/>
            <person name="Schaefer M."/>
            <person name="Mueller-Auer S."/>
            <person name="Gabel C."/>
            <person name="Fuchs M."/>
            <person name="Benes V."/>
            <person name="Wurmbach E."/>
            <person name="Drzonek H."/>
            <person name="Erfle H."/>
            <person name="Jordan N."/>
            <person name="Bangert S."/>
            <person name="Wiedelmann R."/>
            <person name="Kranz H."/>
            <person name="Voss H."/>
            <person name="Holland R."/>
            <person name="Brandt P."/>
            <person name="Nyakatura G."/>
            <person name="Vezzi A."/>
            <person name="D'Angelo M."/>
            <person name="Pallavicini A."/>
            <person name="Toppo S."/>
            <person name="Simionati B."/>
            <person name="Conrad A."/>
            <person name="Hornischer K."/>
            <person name="Kauer G."/>
            <person name="Loehnert T.-H."/>
            <person name="Nordsiek G."/>
            <person name="Reichelt J."/>
            <person name="Scharfe M."/>
            <person name="Schoen O."/>
            <person name="Bargues M."/>
            <person name="Terol J."/>
            <person name="Climent J."/>
            <person name="Navarro P."/>
            <person name="Collado C."/>
            <person name="Perez-Perez A."/>
            <person name="Ottenwaelder B."/>
            <person name="Duchemin D."/>
            <person name="Cooke R."/>
            <person name="Laudie M."/>
            <person name="Berger-Llauro C."/>
            <person name="Purnelle B."/>
            <person name="Masuy D."/>
            <person name="de Haan M."/>
            <person name="Maarse A.C."/>
            <person name="Alcaraz J.-P."/>
            <person name="Cottet A."/>
            <person name="Casacuberta E."/>
            <person name="Monfort A."/>
            <person name="Argiriou A."/>
            <person name="Flores M."/>
            <person name="Liguori R."/>
            <person name="Vitale D."/>
            <person name="Mannhaupt G."/>
            <person name="Haase D."/>
            <person name="Schoof H."/>
            <person name="Rudd S."/>
            <person name="Zaccaria P."/>
            <person name="Mewes H.-W."/>
            <person name="Mayer K.F.X."/>
            <person name="Kaul S."/>
            <person name="Town C.D."/>
            <person name="Koo H.L."/>
            <person name="Tallon L.J."/>
            <person name="Jenkins J."/>
            <person name="Rooney T."/>
            <person name="Rizzo M."/>
            <person name="Walts A."/>
            <person name="Utterback T."/>
            <person name="Fujii C.Y."/>
            <person name="Shea T.P."/>
            <person name="Creasy T.H."/>
            <person name="Haas B."/>
            <person name="Maiti R."/>
            <person name="Wu D."/>
            <person name="Peterson J."/>
            <person name="Van Aken S."/>
            <person name="Pai G."/>
            <person name="Militscher J."/>
            <person name="Sellers P."/>
            <person name="Gill J.E."/>
            <person name="Feldblyum T.V."/>
            <person name="Preuss D."/>
            <person name="Lin X."/>
            <person name="Nierman W.C."/>
            <person name="Salzberg S.L."/>
            <person name="White O."/>
            <person name="Venter J.C."/>
            <person name="Fraser C.M."/>
            <person name="Kaneko T."/>
            <person name="Nakamura Y."/>
            <person name="Sato S."/>
            <person name="Kato T."/>
            <person name="Asamizu E."/>
            <person name="Sasamoto S."/>
            <person name="Kimura T."/>
            <person name="Idesawa K."/>
            <person name="Kawashima K."/>
            <person name="Kishida Y."/>
            <person name="Kiyokawa C."/>
            <person name="Kohara M."/>
            <person name="Matsumoto M."/>
            <person name="Matsuno A."/>
            <person name="Muraki A."/>
            <person name="Nakayama S."/>
            <person name="Nakazaki N."/>
            <person name="Shinpo S."/>
            <person name="Takeuchi C."/>
            <person name="Wada T."/>
            <person name="Watanabe A."/>
            <person name="Yamada M."/>
            <person name="Yasuda M."/>
            <person name="Tabata S."/>
        </authorList>
    </citation>
    <scope>NUCLEOTIDE SEQUENCE [LARGE SCALE GENOMIC DNA]</scope>
    <source>
        <strain>cv. Columbia</strain>
    </source>
</reference>
<reference key="2">
    <citation type="journal article" date="2017" name="Plant J.">
        <title>Araport11: a complete reannotation of the Arabidopsis thaliana reference genome.</title>
        <authorList>
            <person name="Cheng C.Y."/>
            <person name="Krishnakumar V."/>
            <person name="Chan A.P."/>
            <person name="Thibaud-Nissen F."/>
            <person name="Schobel S."/>
            <person name="Town C.D."/>
        </authorList>
    </citation>
    <scope>GENOME REANNOTATION</scope>
    <source>
        <strain>cv. Columbia</strain>
    </source>
</reference>
<reference key="3">
    <citation type="journal article" date="2003" name="Science">
        <title>Empirical analysis of transcriptional activity in the Arabidopsis genome.</title>
        <authorList>
            <person name="Yamada K."/>
            <person name="Lim J."/>
            <person name="Dale J.M."/>
            <person name="Chen H."/>
            <person name="Shinn P."/>
            <person name="Palm C.J."/>
            <person name="Southwick A.M."/>
            <person name="Wu H.C."/>
            <person name="Kim C.J."/>
            <person name="Nguyen M."/>
            <person name="Pham P.K."/>
            <person name="Cheuk R.F."/>
            <person name="Karlin-Newmann G."/>
            <person name="Liu S.X."/>
            <person name="Lam B."/>
            <person name="Sakano H."/>
            <person name="Wu T."/>
            <person name="Yu G."/>
            <person name="Miranda M."/>
            <person name="Quach H.L."/>
            <person name="Tripp M."/>
            <person name="Chang C.H."/>
            <person name="Lee J.M."/>
            <person name="Toriumi M.J."/>
            <person name="Chan M.M."/>
            <person name="Tang C.C."/>
            <person name="Onodera C.S."/>
            <person name="Deng J.M."/>
            <person name="Akiyama K."/>
            <person name="Ansari Y."/>
            <person name="Arakawa T."/>
            <person name="Banh J."/>
            <person name="Banno F."/>
            <person name="Bowser L."/>
            <person name="Brooks S.Y."/>
            <person name="Carninci P."/>
            <person name="Chao Q."/>
            <person name="Choy N."/>
            <person name="Enju A."/>
            <person name="Goldsmith A.D."/>
            <person name="Gurjal M."/>
            <person name="Hansen N.F."/>
            <person name="Hayashizaki Y."/>
            <person name="Johnson-Hopson C."/>
            <person name="Hsuan V.W."/>
            <person name="Iida K."/>
            <person name="Karnes M."/>
            <person name="Khan S."/>
            <person name="Koesema E."/>
            <person name="Ishida J."/>
            <person name="Jiang P.X."/>
            <person name="Jones T."/>
            <person name="Kawai J."/>
            <person name="Kamiya A."/>
            <person name="Meyers C."/>
            <person name="Nakajima M."/>
            <person name="Narusaka M."/>
            <person name="Seki M."/>
            <person name="Sakurai T."/>
            <person name="Satou M."/>
            <person name="Tamse R."/>
            <person name="Vaysberg M."/>
            <person name="Wallender E.K."/>
            <person name="Wong C."/>
            <person name="Yamamura Y."/>
            <person name="Yuan S."/>
            <person name="Shinozaki K."/>
            <person name="Davis R.W."/>
            <person name="Theologis A."/>
            <person name="Ecker J.R."/>
        </authorList>
    </citation>
    <scope>NUCLEOTIDE SEQUENCE [LARGE SCALE MRNA]</scope>
    <source>
        <strain>cv. Columbia</strain>
    </source>
</reference>
<reference key="4">
    <citation type="submission" date="2002-03" db="EMBL/GenBank/DDBJ databases">
        <title>Full-length cDNA from Arabidopsis thaliana.</title>
        <authorList>
            <person name="Brover V.V."/>
            <person name="Troukhan M.E."/>
            <person name="Alexandrov N.A."/>
            <person name="Lu Y.-P."/>
            <person name="Flavell R.B."/>
            <person name="Feldmann K.A."/>
        </authorList>
    </citation>
    <scope>NUCLEOTIDE SEQUENCE [LARGE SCALE MRNA]</scope>
</reference>
<reference key="5">
    <citation type="journal article" date="2012" name="Development">
        <title>Specialisation within the DWARF14 protein family confers distinct responses to karrikins and strigolactones in Arabidopsis.</title>
        <authorList>
            <person name="Waters M.T."/>
            <person name="Nelson D.C."/>
            <person name="Scaffidi A."/>
            <person name="Flematti G.R."/>
            <person name="Sun Y.K."/>
            <person name="Dixon K.W."/>
            <person name="Smith S.M."/>
        </authorList>
    </citation>
    <scope>FUNCTION</scope>
    <scope>DISRUPTION PHENOTYPE</scope>
    <source>
        <strain>cv. Columbia</strain>
    </source>
</reference>
<reference key="6">
    <citation type="journal article" date="2014" name="Curr. Opin. Plant Biol.">
        <title>Strigolactone signalling: standing on the shoulders of DWARFs.</title>
        <authorList>
            <person name="Bennett T."/>
            <person name="Leyser O."/>
        </authorList>
    </citation>
    <scope>REVIEW</scope>
</reference>
<reference key="7">
    <citation type="journal article" date="2014" name="Plant Cell">
        <title>Strigolactone promotes degradation of DWARF14, an alpha/beta hydrolase essential for strigolactone signaling in Arabidopsis.</title>
        <authorList>
            <person name="Chevalier F."/>
            <person name="Nieminen K."/>
            <person name="Sanchez-Ferrero J.C."/>
            <person name="Rodriguez M.L."/>
            <person name="Chagoyen M."/>
            <person name="Hardtke C.S."/>
            <person name="Cubas P."/>
        </authorList>
    </citation>
    <scope>FUNCTION</scope>
    <scope>MUTAGENESIS OF PRO-169</scope>
    <scope>TISSUE SPECIFICITY</scope>
    <scope>SUBCELLULAR LOCATION</scope>
    <scope>INDUCTION</scope>
</reference>
<reference key="8">
    <citation type="journal article" date="2014" name="Proc. Natl. Acad. Sci. U.S.A.">
        <title>Carlactone is converted to carlactonoic acid by MAX1 in Arabidopsis and its methyl ester can directly interact with AtD14 in vitro.</title>
        <authorList>
            <person name="Abe S."/>
            <person name="Sado A."/>
            <person name="Tanaka K."/>
            <person name="Kisugi T."/>
            <person name="Asami K."/>
            <person name="Ota S."/>
            <person name="Kim H.I."/>
            <person name="Yoneyama K."/>
            <person name="Xie X."/>
            <person name="Ohnishi T."/>
            <person name="Seto Y."/>
            <person name="Yamaguchi S."/>
            <person name="Akiyama K."/>
            <person name="Yoneyama K."/>
            <person name="Nomura T."/>
        </authorList>
    </citation>
    <scope>FUNCTION</scope>
    <scope>MUTAGENESIS OF SER-97</scope>
    <scope>ACTIVE SITES</scope>
</reference>
<reference key="9">
    <citation type="journal article" date="2015" name="Plant Cell">
        <title>Strigolactone signaling in Arabidopsis regulates shoot development by targeting D53-like SMXL repressor proteins for ubiquitination and degradation.</title>
        <authorList>
            <person name="Wang L."/>
            <person name="Wang B."/>
            <person name="Jiang L."/>
            <person name="Liu X."/>
            <person name="Li X."/>
            <person name="Lu Z."/>
            <person name="Meng X."/>
            <person name="Wang Y."/>
            <person name="Smith S.M."/>
            <person name="Li J."/>
        </authorList>
    </citation>
    <scope>INTERACTION WITH SMXL6; SMXL7 AND SMXL8</scope>
</reference>
<reference key="10">
    <citation type="journal article" date="2015" name="Plant Cell Physiol.">
        <title>Structural requirements of strigolactones for shoot branching inhibition in rice and Arabidopsis.</title>
        <authorList>
            <person name="Umehara M."/>
            <person name="Cao M."/>
            <person name="Akiyama K."/>
            <person name="Akatsu T."/>
            <person name="Seto Y."/>
            <person name="Hanada A."/>
            <person name="Li W."/>
            <person name="Takeda-Kamiya N."/>
            <person name="Morimoto Y."/>
            <person name="Yamaguchi S."/>
        </authorList>
    </citation>
    <scope>INTERACTION WITH SMXL6; SMXL7 AND SMXL8</scope>
</reference>
<reference key="11">
    <citation type="journal article" date="2016" name="Nature">
        <title>DWARF14 is a non-canonical hormone receptor for strigolactone.</title>
        <authorList>
            <person name="Yao R."/>
            <person name="Ming Z."/>
            <person name="Yan L."/>
            <person name="Li S."/>
            <person name="Wang F."/>
            <person name="Ma S."/>
            <person name="Yu C."/>
            <person name="Yang M."/>
            <person name="Chen L."/>
            <person name="Chen L."/>
            <person name="Li Y."/>
            <person name="Yan C."/>
            <person name="Miao D."/>
            <person name="Sun Z."/>
            <person name="Yan J."/>
            <person name="Sun Y."/>
            <person name="Wang L."/>
            <person name="Chu J."/>
            <person name="Fan S."/>
            <person name="He W."/>
            <person name="Deng H."/>
            <person name="Nan F."/>
            <person name="Li J."/>
            <person name="Rao Z."/>
            <person name="Lou Z."/>
            <person name="Xie D."/>
        </authorList>
    </citation>
    <scope>FUNCTION</scope>
    <scope>SUBUNIT</scope>
    <scope>INTERACTION WITH MAX2</scope>
    <scope>MUTAGENESIS OF GLY-158</scope>
</reference>
<reference key="12">
    <citation type="journal article" date="2020" name="Plant Direct">
        <title>Hydroxyl carlactone derivatives are predominant strigolactones in Arabidopsis.</title>
        <authorList>
            <person name="Yoneyama K."/>
            <person name="Akiyama K."/>
            <person name="Brewer P.B."/>
            <person name="Mori N."/>
            <person name="Kawano-Kawada M."/>
            <person name="Haruta S."/>
            <person name="Nishiwaki H."/>
            <person name="Yamauchi S."/>
            <person name="Xie X."/>
            <person name="Umehara M."/>
            <person name="Beveridge C.A."/>
            <person name="Yoneyama K."/>
            <person name="Nomura T."/>
        </authorList>
    </citation>
    <scope>DISRUPTION PHENOTYPE</scope>
    <source>
        <strain>cv. Columbia</strain>
    </source>
</reference>
<reference key="13">
    <citation type="journal article" date="2013" name="Cell Res.">
        <title>Crystal structures of two phytohormone signal-transducing alpha/beta hydrolases: karrikin-signaling KAI2 and strigolactone-signaling DWARF14.</title>
        <authorList>
            <person name="Zhao L.H."/>
            <person name="Zhou X.E."/>
            <person name="Wu Z.S."/>
            <person name="Yi W."/>
            <person name="Xu Y."/>
            <person name="Li S."/>
            <person name="Xu T.H."/>
            <person name="Liu Y."/>
            <person name="Chen R.Z."/>
            <person name="Kovach A."/>
            <person name="Kang Y."/>
            <person name="Hou L."/>
            <person name="He Y."/>
            <person name="Xie C."/>
            <person name="Song W."/>
            <person name="Zhong D."/>
            <person name="Xu Y."/>
            <person name="Wang Y."/>
            <person name="Li J."/>
            <person name="Zhang C."/>
            <person name="Melcher K."/>
            <person name="Xu H.E."/>
        </authorList>
    </citation>
    <scope>X-RAY CRYSTALLOGRAPHY (3.50 ANGSTROMS)</scope>
    <scope>FUNCTION</scope>
    <scope>SUBSTRATE SPECIFICITY</scope>
    <scope>ACTIVE SITES</scope>
</reference>
<evidence type="ECO:0000269" key="1">
    <source>
    </source>
</evidence>
<evidence type="ECO:0000269" key="2">
    <source>
    </source>
</evidence>
<evidence type="ECO:0000269" key="3">
    <source>
    </source>
</evidence>
<evidence type="ECO:0000269" key="4">
    <source>
    </source>
</evidence>
<evidence type="ECO:0000269" key="5">
    <source>
    </source>
</evidence>
<evidence type="ECO:0000269" key="6">
    <source>
    </source>
</evidence>
<evidence type="ECO:0000269" key="7">
    <source>
    </source>
</evidence>
<evidence type="ECO:0000269" key="8">
    <source>
    </source>
</evidence>
<evidence type="ECO:0000303" key="9">
    <source>
    </source>
</evidence>
<evidence type="ECO:0000303" key="10">
    <source>
    </source>
</evidence>
<evidence type="ECO:0000305" key="11"/>
<evidence type="ECO:0000305" key="12">
    <source>
    </source>
</evidence>
<evidence type="ECO:0000312" key="13">
    <source>
        <dbReference type="Araport" id="AT3G03990"/>
    </source>
</evidence>
<evidence type="ECO:0000312" key="14">
    <source>
        <dbReference type="EMBL" id="AAF05858.1"/>
    </source>
</evidence>
<evidence type="ECO:0007829" key="15">
    <source>
        <dbReference type="PDB" id="4IH4"/>
    </source>
</evidence>
<evidence type="ECO:0007829" key="16">
    <source>
        <dbReference type="PDB" id="5HZG"/>
    </source>
</evidence>
<evidence type="ECO:0007829" key="17">
    <source>
        <dbReference type="PDB" id="8VD3"/>
    </source>
</evidence>
<name>D14_ARATH</name>